<gene>
    <name evidence="1" type="primary">uppS</name>
    <name type="ordered locus">YPTB2998</name>
</gene>
<proteinExistence type="inferred from homology"/>
<feature type="chain" id="PRO_0000123724" description="Ditrans,polycis-undecaprenyl-diphosphate synthase ((2E,6E)-farnesyl-diphosphate specific)">
    <location>
        <begin position="1"/>
        <end position="252"/>
    </location>
</feature>
<feature type="active site" evidence="1">
    <location>
        <position position="24"/>
    </location>
</feature>
<feature type="active site" description="Proton acceptor" evidence="1">
    <location>
        <position position="72"/>
    </location>
</feature>
<feature type="binding site" evidence="1">
    <location>
        <position position="24"/>
    </location>
    <ligand>
        <name>Mg(2+)</name>
        <dbReference type="ChEBI" id="CHEBI:18420"/>
    </ligand>
</feature>
<feature type="binding site" evidence="1">
    <location>
        <begin position="25"/>
        <end position="28"/>
    </location>
    <ligand>
        <name>substrate</name>
    </ligand>
</feature>
<feature type="binding site" evidence="1">
    <location>
        <position position="29"/>
    </location>
    <ligand>
        <name>substrate</name>
    </ligand>
</feature>
<feature type="binding site" evidence="1">
    <location>
        <position position="37"/>
    </location>
    <ligand>
        <name>substrate</name>
    </ligand>
</feature>
<feature type="binding site" evidence="1">
    <location>
        <position position="41"/>
    </location>
    <ligand>
        <name>substrate</name>
    </ligand>
</feature>
<feature type="binding site" evidence="1">
    <location>
        <begin position="69"/>
        <end position="71"/>
    </location>
    <ligand>
        <name>substrate</name>
    </ligand>
</feature>
<feature type="binding site" evidence="1">
    <location>
        <position position="73"/>
    </location>
    <ligand>
        <name>substrate</name>
    </ligand>
</feature>
<feature type="binding site" evidence="1">
    <location>
        <position position="75"/>
    </location>
    <ligand>
        <name>substrate</name>
    </ligand>
</feature>
<feature type="binding site" evidence="1">
    <location>
        <position position="192"/>
    </location>
    <ligand>
        <name>substrate</name>
    </ligand>
</feature>
<feature type="binding site" evidence="1">
    <location>
        <position position="197"/>
    </location>
    <ligand>
        <name>Mg(2+)</name>
        <dbReference type="ChEBI" id="CHEBI:18420"/>
    </ligand>
</feature>
<feature type="binding site" evidence="1">
    <location>
        <begin position="198"/>
        <end position="200"/>
    </location>
    <ligand>
        <name>substrate</name>
    </ligand>
</feature>
<feature type="binding site" evidence="1">
    <location>
        <position position="211"/>
    </location>
    <ligand>
        <name>Mg(2+)</name>
        <dbReference type="ChEBI" id="CHEBI:18420"/>
    </ligand>
</feature>
<comment type="function">
    <text evidence="1">Catalyzes the sequential condensation of isopentenyl diphosphate (IPP) with (2E,6E)-farnesyl diphosphate (E,E-FPP) to yield (2Z,6Z,10Z,14Z,18Z,22Z,26Z,30Z,34E,38E)-undecaprenyl diphosphate (di-trans,octa-cis-UPP). UPP is the precursor of glycosyl carrier lipid in the biosynthesis of bacterial cell wall polysaccharide components such as peptidoglycan and lipopolysaccharide.</text>
</comment>
<comment type="catalytic activity">
    <reaction evidence="1">
        <text>8 isopentenyl diphosphate + (2E,6E)-farnesyl diphosphate = di-trans,octa-cis-undecaprenyl diphosphate + 8 diphosphate</text>
        <dbReference type="Rhea" id="RHEA:27551"/>
        <dbReference type="ChEBI" id="CHEBI:33019"/>
        <dbReference type="ChEBI" id="CHEBI:58405"/>
        <dbReference type="ChEBI" id="CHEBI:128769"/>
        <dbReference type="ChEBI" id="CHEBI:175763"/>
        <dbReference type="EC" id="2.5.1.31"/>
    </reaction>
</comment>
<comment type="cofactor">
    <cofactor evidence="1">
        <name>Mg(2+)</name>
        <dbReference type="ChEBI" id="CHEBI:18420"/>
    </cofactor>
    <text evidence="1">Binds 2 magnesium ions per subunit.</text>
</comment>
<comment type="subunit">
    <text evidence="1">Homodimer.</text>
</comment>
<comment type="similarity">
    <text evidence="1">Belongs to the UPP synthase family.</text>
</comment>
<name>UPPS_YERPS</name>
<sequence>MSPVKEDRANLSPRSPRHVAIIMDGNGRWAKNKGKLRVFGHKAGVKSVRRAVSFAAKHNLDALTLYAFSSENWNRPDQEVTALMELFVRALDSEVKSLHKHNVRLSIIGDISRFSGRLQERIRRSEKLTANNDGLKLNIAANYGGRWDIIQGVRHLAEQVQKGELQPTDISEESLNSYICLHEQSQVDLVIRTGGEHRISNFLLWQIAYAELYFTDVLWPDFDENVFEGALNAFAQRERRFGGTTPIDATAS</sequence>
<organism>
    <name type="scientific">Yersinia pseudotuberculosis serotype I (strain IP32953)</name>
    <dbReference type="NCBI Taxonomy" id="273123"/>
    <lineage>
        <taxon>Bacteria</taxon>
        <taxon>Pseudomonadati</taxon>
        <taxon>Pseudomonadota</taxon>
        <taxon>Gammaproteobacteria</taxon>
        <taxon>Enterobacterales</taxon>
        <taxon>Yersiniaceae</taxon>
        <taxon>Yersinia</taxon>
    </lineage>
</organism>
<keyword id="KW-0133">Cell shape</keyword>
<keyword id="KW-0961">Cell wall biogenesis/degradation</keyword>
<keyword id="KW-0460">Magnesium</keyword>
<keyword id="KW-0479">Metal-binding</keyword>
<keyword id="KW-0573">Peptidoglycan synthesis</keyword>
<keyword id="KW-0808">Transferase</keyword>
<protein>
    <recommendedName>
        <fullName evidence="1">Ditrans,polycis-undecaprenyl-diphosphate synthase ((2E,6E)-farnesyl-diphosphate specific)</fullName>
        <ecNumber evidence="1">2.5.1.31</ecNumber>
    </recommendedName>
    <alternativeName>
        <fullName evidence="1">Ditrans,polycis-undecaprenylcistransferase</fullName>
    </alternativeName>
    <alternativeName>
        <fullName evidence="1">Undecaprenyl diphosphate synthase</fullName>
        <shortName evidence="1">UDS</shortName>
    </alternativeName>
    <alternativeName>
        <fullName evidence="1">Undecaprenyl pyrophosphate synthase</fullName>
        <shortName evidence="1">UPP synthase</shortName>
    </alternativeName>
</protein>
<accession>Q667J4</accession>
<evidence type="ECO:0000255" key="1">
    <source>
        <dbReference type="HAMAP-Rule" id="MF_01139"/>
    </source>
</evidence>
<reference key="1">
    <citation type="journal article" date="2004" name="Proc. Natl. Acad. Sci. U.S.A.">
        <title>Insights into the evolution of Yersinia pestis through whole-genome comparison with Yersinia pseudotuberculosis.</title>
        <authorList>
            <person name="Chain P.S.G."/>
            <person name="Carniel E."/>
            <person name="Larimer F.W."/>
            <person name="Lamerdin J."/>
            <person name="Stoutland P.O."/>
            <person name="Regala W.M."/>
            <person name="Georgescu A.M."/>
            <person name="Vergez L.M."/>
            <person name="Land M.L."/>
            <person name="Motin V.L."/>
            <person name="Brubaker R.R."/>
            <person name="Fowler J."/>
            <person name="Hinnebusch J."/>
            <person name="Marceau M."/>
            <person name="Medigue C."/>
            <person name="Simonet M."/>
            <person name="Chenal-Francisque V."/>
            <person name="Souza B."/>
            <person name="Dacheux D."/>
            <person name="Elliott J.M."/>
            <person name="Derbise A."/>
            <person name="Hauser L.J."/>
            <person name="Garcia E."/>
        </authorList>
    </citation>
    <scope>NUCLEOTIDE SEQUENCE [LARGE SCALE GENOMIC DNA]</scope>
    <source>
        <strain>IP32953</strain>
    </source>
</reference>
<dbReference type="EC" id="2.5.1.31" evidence="1"/>
<dbReference type="EMBL" id="BX936398">
    <property type="protein sequence ID" value="CAH22236.1"/>
    <property type="molecule type" value="Genomic_DNA"/>
</dbReference>
<dbReference type="RefSeq" id="WP_002212136.1">
    <property type="nucleotide sequence ID" value="NZ_CP009712.1"/>
</dbReference>
<dbReference type="SMR" id="Q667J4"/>
<dbReference type="GeneID" id="57977512"/>
<dbReference type="KEGG" id="ypo:BZ17_3623"/>
<dbReference type="KEGG" id="yps:YPTB2998"/>
<dbReference type="PATRIC" id="fig|273123.14.peg.3803"/>
<dbReference type="Proteomes" id="UP000001011">
    <property type="component" value="Chromosome"/>
</dbReference>
<dbReference type="GO" id="GO:0005829">
    <property type="term" value="C:cytosol"/>
    <property type="evidence" value="ECO:0007669"/>
    <property type="project" value="TreeGrafter"/>
</dbReference>
<dbReference type="GO" id="GO:0008834">
    <property type="term" value="F:ditrans,polycis-undecaprenyl-diphosphate synthase [(2E,6E)-farnesyl-diphosphate specific] activity"/>
    <property type="evidence" value="ECO:0007669"/>
    <property type="project" value="UniProtKB-UniRule"/>
</dbReference>
<dbReference type="GO" id="GO:0000287">
    <property type="term" value="F:magnesium ion binding"/>
    <property type="evidence" value="ECO:0007669"/>
    <property type="project" value="UniProtKB-UniRule"/>
</dbReference>
<dbReference type="GO" id="GO:0071555">
    <property type="term" value="P:cell wall organization"/>
    <property type="evidence" value="ECO:0007669"/>
    <property type="project" value="UniProtKB-KW"/>
</dbReference>
<dbReference type="GO" id="GO:0009252">
    <property type="term" value="P:peptidoglycan biosynthetic process"/>
    <property type="evidence" value="ECO:0007669"/>
    <property type="project" value="UniProtKB-UniRule"/>
</dbReference>
<dbReference type="GO" id="GO:0016094">
    <property type="term" value="P:polyprenol biosynthetic process"/>
    <property type="evidence" value="ECO:0007669"/>
    <property type="project" value="TreeGrafter"/>
</dbReference>
<dbReference type="GO" id="GO:0008360">
    <property type="term" value="P:regulation of cell shape"/>
    <property type="evidence" value="ECO:0007669"/>
    <property type="project" value="UniProtKB-KW"/>
</dbReference>
<dbReference type="CDD" id="cd00475">
    <property type="entry name" value="Cis_IPPS"/>
    <property type="match status" value="1"/>
</dbReference>
<dbReference type="FunFam" id="3.40.1180.10:FF:000001">
    <property type="entry name" value="(2E,6E)-farnesyl-diphosphate-specific ditrans,polycis-undecaprenyl-diphosphate synthase"/>
    <property type="match status" value="1"/>
</dbReference>
<dbReference type="Gene3D" id="3.40.1180.10">
    <property type="entry name" value="Decaprenyl diphosphate synthase-like"/>
    <property type="match status" value="1"/>
</dbReference>
<dbReference type="HAMAP" id="MF_01139">
    <property type="entry name" value="ISPT"/>
    <property type="match status" value="1"/>
</dbReference>
<dbReference type="InterPro" id="IPR001441">
    <property type="entry name" value="UPP_synth-like"/>
</dbReference>
<dbReference type="InterPro" id="IPR018520">
    <property type="entry name" value="UPP_synth-like_CS"/>
</dbReference>
<dbReference type="InterPro" id="IPR036424">
    <property type="entry name" value="UPP_synth-like_sf"/>
</dbReference>
<dbReference type="NCBIfam" id="NF007596">
    <property type="entry name" value="PRK10240.1"/>
    <property type="match status" value="1"/>
</dbReference>
<dbReference type="NCBIfam" id="NF011405">
    <property type="entry name" value="PRK14830.1"/>
    <property type="match status" value="1"/>
</dbReference>
<dbReference type="NCBIfam" id="TIGR00055">
    <property type="entry name" value="uppS"/>
    <property type="match status" value="1"/>
</dbReference>
<dbReference type="PANTHER" id="PTHR10291:SF0">
    <property type="entry name" value="DEHYDRODOLICHYL DIPHOSPHATE SYNTHASE 2"/>
    <property type="match status" value="1"/>
</dbReference>
<dbReference type="PANTHER" id="PTHR10291">
    <property type="entry name" value="DEHYDRODOLICHYL DIPHOSPHATE SYNTHASE FAMILY MEMBER"/>
    <property type="match status" value="1"/>
</dbReference>
<dbReference type="Pfam" id="PF01255">
    <property type="entry name" value="Prenyltransf"/>
    <property type="match status" value="1"/>
</dbReference>
<dbReference type="SUPFAM" id="SSF64005">
    <property type="entry name" value="Undecaprenyl diphosphate synthase"/>
    <property type="match status" value="1"/>
</dbReference>
<dbReference type="PROSITE" id="PS01066">
    <property type="entry name" value="UPP_SYNTHASE"/>
    <property type="match status" value="1"/>
</dbReference>